<proteinExistence type="evidence at protein level"/>
<reference key="1">
    <citation type="journal article" date="2007" name="Science">
        <title>The Chlamydomonas genome reveals the evolution of key animal and plant functions.</title>
        <authorList>
            <person name="Merchant S.S."/>
            <person name="Prochnik S.E."/>
            <person name="Vallon O."/>
            <person name="Harris E.H."/>
            <person name="Karpowicz S.J."/>
            <person name="Witman G.B."/>
            <person name="Terry A."/>
            <person name="Salamov A."/>
            <person name="Fritz-Laylin L.K."/>
            <person name="Marechal-Drouard L."/>
            <person name="Marshall W.F."/>
            <person name="Qu L.H."/>
            <person name="Nelson D.R."/>
            <person name="Sanderfoot A.A."/>
            <person name="Spalding M.H."/>
            <person name="Kapitonov V.V."/>
            <person name="Ren Q."/>
            <person name="Ferris P."/>
            <person name="Lindquist E."/>
            <person name="Shapiro H."/>
            <person name="Lucas S.M."/>
            <person name="Grimwood J."/>
            <person name="Schmutz J."/>
            <person name="Cardol P."/>
            <person name="Cerutti H."/>
            <person name="Chanfreau G."/>
            <person name="Chen C.L."/>
            <person name="Cognat V."/>
            <person name="Croft M.T."/>
            <person name="Dent R."/>
            <person name="Dutcher S."/>
            <person name="Fernandez E."/>
            <person name="Fukuzawa H."/>
            <person name="Gonzalez-Ballester D."/>
            <person name="Gonzalez-Halphen D."/>
            <person name="Hallmann A."/>
            <person name="Hanikenne M."/>
            <person name="Hippler M."/>
            <person name="Inwood W."/>
            <person name="Jabbari K."/>
            <person name="Kalanon M."/>
            <person name="Kuras R."/>
            <person name="Lefebvre P.A."/>
            <person name="Lemaire S.D."/>
            <person name="Lobanov A.V."/>
            <person name="Lohr M."/>
            <person name="Manuell A."/>
            <person name="Meier I."/>
            <person name="Mets L."/>
            <person name="Mittag M."/>
            <person name="Mittelmeier T."/>
            <person name="Moroney J.V."/>
            <person name="Moseley J."/>
            <person name="Napoli C."/>
            <person name="Nedelcu A.M."/>
            <person name="Niyogi K."/>
            <person name="Novoselov S.V."/>
            <person name="Paulsen I.T."/>
            <person name="Pazour G.J."/>
            <person name="Purton S."/>
            <person name="Ral J.P."/>
            <person name="Riano-Pachon D.M."/>
            <person name="Riekhof W."/>
            <person name="Rymarquis L."/>
            <person name="Schroda M."/>
            <person name="Stern D."/>
            <person name="Umen J."/>
            <person name="Willows R."/>
            <person name="Wilson N."/>
            <person name="Zimmer S.L."/>
            <person name="Allmer J."/>
            <person name="Balk J."/>
            <person name="Bisova K."/>
            <person name="Chen C.J."/>
            <person name="Elias M."/>
            <person name="Gendler K."/>
            <person name="Hauser C."/>
            <person name="Lamb M.R."/>
            <person name="Ledford H."/>
            <person name="Long J.C."/>
            <person name="Minagawa J."/>
            <person name="Page M.D."/>
            <person name="Pan J."/>
            <person name="Pootakham W."/>
            <person name="Roje S."/>
            <person name="Rose A."/>
            <person name="Stahlberg E."/>
            <person name="Terauchi A.M."/>
            <person name="Yang P."/>
            <person name="Ball S."/>
            <person name="Bowler C."/>
            <person name="Dieckmann C.L."/>
            <person name="Gladyshev V.N."/>
            <person name="Green P."/>
            <person name="Jorgensen R."/>
            <person name="Mayfield S."/>
            <person name="Mueller-Roeber B."/>
            <person name="Rajamani S."/>
            <person name="Sayre R.T."/>
            <person name="Brokstein P."/>
            <person name="Dubchak I."/>
            <person name="Goodstein D."/>
            <person name="Hornick L."/>
            <person name="Huang Y.W."/>
            <person name="Jhaveri J."/>
            <person name="Luo Y."/>
            <person name="Martinez D."/>
            <person name="Ngau W.C."/>
            <person name="Otillar B."/>
            <person name="Poliakov A."/>
            <person name="Porter A."/>
            <person name="Szajkowski L."/>
            <person name="Werner G."/>
            <person name="Zhou K."/>
            <person name="Grigoriev I.V."/>
            <person name="Rokhsar D.S."/>
            <person name="Grossman A.R."/>
        </authorList>
    </citation>
    <scope>NUCLEOTIDE SEQUENCE [LARGE SCALE GENOMIC DNA]</scope>
    <source>
        <strain>CC-503</strain>
    </source>
</reference>
<reference key="2">
    <citation type="journal article" date="2013" name="Plant J.">
        <title>Biogenesis of photosynthetic complexes in the chloroplast of Chlamydomonas reinhardtii requires ARSA1, a homolog of prokaryotic arsenite transporter and eukaryotic TRC40 for guided entry of tail-anchored proteins.</title>
        <authorList>
            <person name="Formighieri C."/>
            <person name="Cazzaniga S."/>
            <person name="Kuras R."/>
            <person name="Bassi R."/>
        </authorList>
    </citation>
    <scope>FUNCTION</scope>
    <scope>SUBCELLULAR LOCATION</scope>
    <scope>DISRUPTION PHENOTYPE</scope>
</reference>
<reference key="3">
    <citation type="journal article" date="2017" name="Sci. Rep.">
        <title>In search of tail-anchored protein machinery in plants: reevaluating the role of arsenite transporters.</title>
        <authorList>
            <person name="Maestre-Reyna M."/>
            <person name="Wu S.M."/>
            <person name="Chang Y.C."/>
            <person name="Chen C.C."/>
            <person name="Maestre-Reyna A."/>
            <person name="Wang A.H."/>
            <person name="Chang H.Y."/>
        </authorList>
    </citation>
    <scope>FUNCTION</scope>
    <scope>SUBUNIT</scope>
    <scope>INTERACTION WITH TOC34</scope>
    <scope>SUBCELLULAR LOCATION</scope>
</reference>
<keyword id="KW-0002">3D-structure</keyword>
<keyword id="KW-0067">ATP-binding</keyword>
<keyword id="KW-0963">Cytoplasm</keyword>
<keyword id="KW-0378">Hydrolase</keyword>
<keyword id="KW-0547">Nucleotide-binding</keyword>
<keyword id="KW-0813">Transport</keyword>
<name>ASNA1_CHLRE</name>
<organism>
    <name type="scientific">Chlamydomonas reinhardtii</name>
    <name type="common">Chlamydomonas smithii</name>
    <dbReference type="NCBI Taxonomy" id="3055"/>
    <lineage>
        <taxon>Eukaryota</taxon>
        <taxon>Viridiplantae</taxon>
        <taxon>Chlorophyta</taxon>
        <taxon>core chlorophytes</taxon>
        <taxon>Chlorophyceae</taxon>
        <taxon>CS clade</taxon>
        <taxon>Chlamydomonadales</taxon>
        <taxon>Chlamydomonadaceae</taxon>
        <taxon>Chlamydomonas</taxon>
    </lineage>
</organism>
<gene>
    <name evidence="5" type="primary">ARSA1</name>
    <name evidence="4" type="synonym">AS1</name>
    <name evidence="7" type="ORF">CHLREDRAFT_132949</name>
</gene>
<accession>A8JGB0</accession>
<protein>
    <recommendedName>
        <fullName evidence="6">ATPase ARSA1</fullName>
        <shortName evidence="5">Cr-ArsA1</shortName>
        <ecNumber evidence="6">3.6.-.-</ecNumber>
    </recommendedName>
    <alternativeName>
        <fullName evidence="6">Arsenical pump-driving ATPase homolog 1</fullName>
    </alternativeName>
    <alternativeName>
        <fullName evidence="6">Arsenite-stimulated ATPase homolog 1</fullName>
    </alternativeName>
    <alternativeName>
        <fullName evidence="4">Protein ANTENNA SIZE MUTANT 1</fullName>
    </alternativeName>
</protein>
<feature type="chain" id="PRO_0000442530" description="ATPase ARSA1">
    <location>
        <begin position="1"/>
        <end position="777"/>
    </location>
</feature>
<feature type="active site" evidence="1">
    <location>
        <position position="139"/>
    </location>
</feature>
<feature type="active site" evidence="1">
    <location>
        <position position="483"/>
    </location>
</feature>
<feature type="binding site" evidence="1">
    <location>
        <begin position="110"/>
        <end position="117"/>
    </location>
    <ligand>
        <name>ATP</name>
        <dbReference type="ChEBI" id="CHEBI:30616"/>
    </ligand>
</feature>
<feature type="binding site" evidence="1">
    <location>
        <position position="372"/>
    </location>
    <ligand>
        <name>ATP</name>
        <dbReference type="ChEBI" id="CHEBI:30616"/>
    </ligand>
</feature>
<feature type="binding site" evidence="1">
    <location>
        <begin position="454"/>
        <end position="461"/>
    </location>
    <ligand>
        <name>ATP</name>
        <dbReference type="ChEBI" id="CHEBI:30616"/>
    </ligand>
</feature>
<feature type="binding site" evidence="1">
    <location>
        <position position="712"/>
    </location>
    <ligand>
        <name>ATP</name>
        <dbReference type="ChEBI" id="CHEBI:30616"/>
    </ligand>
</feature>
<comment type="function">
    <text evidence="2 3">ATPase required for the post-translational delivery of tail-anchored (TA) proteins to the chloroplast. Required for the accumulation of TOC34, an essential component of the outer chloroplast membrane translocon (TOC) complex (PubMed:23167510, PubMed:28382961). Recognizes and selectively binds the transmembrane domain of TA proteins in the cytosol. This complex then targets to chloroplast, where the tail-anchored protein is released for insertion. This process is regulated by ATP binding and hydrolysis (PubMed:28382961).</text>
</comment>
<comment type="subunit">
    <text evidence="3">Monomer (PubMed:28382961). Interacts with TOC34 (PubMed:28382961).</text>
</comment>
<comment type="subcellular location">
    <subcellularLocation>
        <location evidence="2 3">Cytoplasm</location>
        <location evidence="2 3">Cytosol</location>
    </subcellularLocation>
</comment>
<comment type="disruption phenotype">
    <text evidence="2">Small chloroplast and strong decrease in chlorophyll content. Defect in the accumulation of photosystem protein complexes. Defect in the accumulation of TOC34, an essential component of the outer chloroplast membrane translocon (TOC) complex, which, in turn, catalyzes the import of nucleus-encoded precursor polypeptides into the chloroplast.</text>
</comment>
<comment type="similarity">
    <text evidence="6">Belongs to the arsA ATPase family.</text>
</comment>
<comment type="sequence caution" evidence="6">
    <conflict type="erroneous gene model prediction">
        <sequence resource="EMBL-CDS" id="EDO97076"/>
    </conflict>
</comment>
<evidence type="ECO:0000250" key="1">
    <source>
        <dbReference type="UniProtKB" id="Q12154"/>
    </source>
</evidence>
<evidence type="ECO:0000269" key="2">
    <source>
    </source>
</evidence>
<evidence type="ECO:0000269" key="3">
    <source>
    </source>
</evidence>
<evidence type="ECO:0000303" key="4">
    <source>
    </source>
</evidence>
<evidence type="ECO:0000303" key="5">
    <source>
    </source>
</evidence>
<evidence type="ECO:0000305" key="6"/>
<evidence type="ECO:0000312" key="7">
    <source>
        <dbReference type="EMBL" id="EDO97076.1"/>
    </source>
</evidence>
<sequence>MALASGNRLGSARGQTCADASGRVAPRLLSRACSGSPLALGVLACLGAASSVKPHPRLPATTSAASAPLPARGPAPCAAVPTVVTPDNATGVFEELAAGQQRKYIMISGKGGVGKTSLSASLAVKLAAAGHTTLVVSTDPAHSLSDSLAQDVSGGRPVLLQGTDLPLWGLEIDPEEAKREFFEGSGAGQDGEAGGPSAASQVSDFMNRMGMGFVIDQLKELKLGELLNTPPPGLDEAVAIAKVVQFVQAAEYARFSRIVFDTAPTGHTLRLLALPDFVDASLAKVIRLRKKLNGATSVVRGLFGAGESQDEAVEKLELLQQRVRMVKALFRDKTQTEFIIATIPTYLGVNESSRLLQALRAEQIPCKRIIVNQIVGPQQGDAYLRMKMKDQIAALEMVANDPGLRPLRKVIAPMVDVEVRGVPALSYFGNVVWKDVYDQMNQGADRKFFLLGGKGGVGKTSCSSSLAVHFANDGLPTLVVSTDPAHSLSDAFDQDLSGGSPVKITSPLGDELPLWGLQLDPEQAKAELRAVLADDGGKKLNETLDGLGLGVISDQLKDLQLGELLDTPPPGVDEAIAIAKVVQFLKAPEYSHFKRIVFDTAPTGHTLRLLSLPDFLDASIGKLVRLRQKLSAATSAVKNLFSGGQPGEEDVAVKRLEALQASMEDAKAMFRNQQTTEFIIVTIPTVMATAESCRLASALQHEGIPLKTIIVNQVVQANATDKFLTARRADQARALHHLEEDTGPDGLASLQLIKAPLCDLEVRGVPALSYFGNVVWK</sequence>
<dbReference type="EC" id="3.6.-.-" evidence="6"/>
<dbReference type="EMBL" id="DS496183">
    <property type="protein sequence ID" value="EDO97076.1"/>
    <property type="status" value="ALT_SEQ"/>
    <property type="molecule type" value="Genomic_DNA"/>
</dbReference>
<dbReference type="PDB" id="5ZME">
    <property type="method" value="X-ray"/>
    <property type="resolution" value="3.60 A"/>
    <property type="chains" value="A=91-777"/>
</dbReference>
<dbReference type="PDB" id="5ZMF">
    <property type="method" value="X-ray"/>
    <property type="resolution" value="3.56 A"/>
    <property type="chains" value="A=91-777"/>
</dbReference>
<dbReference type="PDBsum" id="5ZME"/>
<dbReference type="PDBsum" id="5ZMF"/>
<dbReference type="SMR" id="A8JGB0"/>
<dbReference type="TCDB" id="3.A.19.1.4">
    <property type="family name" value="the guided entry of tail anchored protein (get) family"/>
</dbReference>
<dbReference type="PaxDb" id="3055-EDO97076"/>
<dbReference type="eggNOG" id="KOG2825">
    <property type="taxonomic scope" value="Eukaryota"/>
</dbReference>
<dbReference type="HOGENOM" id="CLU_040761_2_1_1"/>
<dbReference type="GO" id="GO:0005829">
    <property type="term" value="C:cytosol"/>
    <property type="evidence" value="ECO:0000314"/>
    <property type="project" value="UniProtKB"/>
</dbReference>
<dbReference type="GO" id="GO:0005524">
    <property type="term" value="F:ATP binding"/>
    <property type="evidence" value="ECO:0007669"/>
    <property type="project" value="UniProtKB-KW"/>
</dbReference>
<dbReference type="GO" id="GO:0016887">
    <property type="term" value="F:ATP hydrolysis activity"/>
    <property type="evidence" value="ECO:0007669"/>
    <property type="project" value="InterPro"/>
</dbReference>
<dbReference type="CDD" id="cd02035">
    <property type="entry name" value="ArsA"/>
    <property type="match status" value="2"/>
</dbReference>
<dbReference type="FunFam" id="3.40.50.300:FF:002933">
    <property type="entry name" value="Putative arsenical pump-driving ATPase"/>
    <property type="match status" value="2"/>
</dbReference>
<dbReference type="Gene3D" id="3.40.50.300">
    <property type="entry name" value="P-loop containing nucleotide triphosphate hydrolases"/>
    <property type="match status" value="2"/>
</dbReference>
<dbReference type="InterPro" id="IPR025723">
    <property type="entry name" value="Anion-transp_ATPase-like_dom"/>
</dbReference>
<dbReference type="InterPro" id="IPR016300">
    <property type="entry name" value="ATPase_ArsA/GET3"/>
</dbReference>
<dbReference type="InterPro" id="IPR027417">
    <property type="entry name" value="P-loop_NTPase"/>
</dbReference>
<dbReference type="NCBIfam" id="TIGR00345">
    <property type="entry name" value="GET3_arsA_TRC40"/>
    <property type="match status" value="2"/>
</dbReference>
<dbReference type="PANTHER" id="PTHR10803">
    <property type="entry name" value="ARSENICAL PUMP-DRIVING ATPASE ARSENITE-TRANSLOCATING ATPASE"/>
    <property type="match status" value="1"/>
</dbReference>
<dbReference type="PANTHER" id="PTHR10803:SF0">
    <property type="entry name" value="ATPASE GET3B"/>
    <property type="match status" value="1"/>
</dbReference>
<dbReference type="Pfam" id="PF02374">
    <property type="entry name" value="ArsA_ATPase"/>
    <property type="match status" value="2"/>
</dbReference>
<dbReference type="SUPFAM" id="SSF52540">
    <property type="entry name" value="P-loop containing nucleoside triphosphate hydrolases"/>
    <property type="match status" value="2"/>
</dbReference>